<reference key="1">
    <citation type="journal article" date="2010" name="Genome Biol.">
        <title>Structure and dynamics of the pan-genome of Streptococcus pneumoniae and closely related species.</title>
        <authorList>
            <person name="Donati C."/>
            <person name="Hiller N.L."/>
            <person name="Tettelin H."/>
            <person name="Muzzi A."/>
            <person name="Croucher N.J."/>
            <person name="Angiuoli S.V."/>
            <person name="Oggioni M."/>
            <person name="Dunning Hotopp J.C."/>
            <person name="Hu F.Z."/>
            <person name="Riley D.R."/>
            <person name="Covacci A."/>
            <person name="Mitchell T.J."/>
            <person name="Bentley S.D."/>
            <person name="Kilian M."/>
            <person name="Ehrlich G.D."/>
            <person name="Rappuoli R."/>
            <person name="Moxon E.R."/>
            <person name="Masignani V."/>
        </authorList>
    </citation>
    <scope>NUCLEOTIDE SEQUENCE [LARGE SCALE GENOMIC DNA]</scope>
    <source>
        <strain>Taiwan19F-14</strain>
    </source>
</reference>
<protein>
    <recommendedName>
        <fullName evidence="1">UPF0210 protein SPT_0285</fullName>
    </recommendedName>
</protein>
<proteinExistence type="inferred from homology"/>
<organism>
    <name type="scientific">Streptococcus pneumoniae (strain Taiwan19F-14)</name>
    <dbReference type="NCBI Taxonomy" id="487213"/>
    <lineage>
        <taxon>Bacteria</taxon>
        <taxon>Bacillati</taxon>
        <taxon>Bacillota</taxon>
        <taxon>Bacilli</taxon>
        <taxon>Lactobacillales</taxon>
        <taxon>Streptococcaceae</taxon>
        <taxon>Streptococcus</taxon>
    </lineage>
</organism>
<gene>
    <name type="ordered locus">SPT_0285</name>
</gene>
<sequence>MDIRQVTETIAMIEEQNFDIRTITMGISLLDCIDPNINRAAEKIYQKITTKAANLVAVGDEIAAELGIPIVNKRVSVTPISLIGAATDATDYVVLAKALDKAAKEIGVDFIGGFSALVQKGYQKGDEILINSIPRALAETDKVCSSVNIGSTKSGINMTAVADMGRIIKETANLSDMGVAKLVVFANAVEDNPFMAGAFHGVGEADVIINVGVSGPGVVKRALEKVRGQSFDVVAETVKKTAFKITRIGQLVGQMASERLGVEFGIVDLSLAPTPAVGDSVARVLEEMGLETVGTHGTTAALALLNDQVKKGGVMACNQVGGLSGAFIPVSEDEGMIAAVQNGSLNLEKLEAMTAICSVGLDMIAIPEDTPAETIAAMIADEAAIGVINMKTTAVRIIPKGREGDMIEFGGLLGTAPVMKVNGASSVDFISRGGQIPAPIHSFKN</sequence>
<accession>C1CPB7</accession>
<feature type="chain" id="PRO_1000164873" description="UPF0210 protein SPT_0285">
    <location>
        <begin position="1"/>
        <end position="445"/>
    </location>
</feature>
<comment type="subunit">
    <text evidence="1">Homodimer.</text>
</comment>
<comment type="similarity">
    <text evidence="1">Belongs to the UPF0210 family.</text>
</comment>
<evidence type="ECO:0000255" key="1">
    <source>
        <dbReference type="HAMAP-Rule" id="MF_01221"/>
    </source>
</evidence>
<dbReference type="EMBL" id="CP000921">
    <property type="protein sequence ID" value="ACO22682.1"/>
    <property type="molecule type" value="Genomic_DNA"/>
</dbReference>
<dbReference type="RefSeq" id="WP_000354918.1">
    <property type="nucleotide sequence ID" value="NC_012469.1"/>
</dbReference>
<dbReference type="SMR" id="C1CPB7"/>
<dbReference type="KEGG" id="snt:SPT_0285"/>
<dbReference type="HOGENOM" id="CLU_048704_0_0_9"/>
<dbReference type="CDD" id="cd08025">
    <property type="entry name" value="RNR_PFL_like_DUF711"/>
    <property type="match status" value="1"/>
</dbReference>
<dbReference type="Gene3D" id="3.20.70.20">
    <property type="match status" value="1"/>
</dbReference>
<dbReference type="HAMAP" id="MF_01221">
    <property type="entry name" value="UPF0210"/>
    <property type="match status" value="1"/>
</dbReference>
<dbReference type="InterPro" id="IPR007841">
    <property type="entry name" value="UPF0210"/>
</dbReference>
<dbReference type="NCBIfam" id="NF003700">
    <property type="entry name" value="PRK05313.1"/>
    <property type="match status" value="1"/>
</dbReference>
<dbReference type="PANTHER" id="PTHR37560:SF1">
    <property type="entry name" value="UPF0210 PROTEIN MJ1665"/>
    <property type="match status" value="1"/>
</dbReference>
<dbReference type="PANTHER" id="PTHR37560">
    <property type="entry name" value="UPF0210 PROTEIN SPR0218"/>
    <property type="match status" value="1"/>
</dbReference>
<dbReference type="Pfam" id="PF05167">
    <property type="entry name" value="DUF711"/>
    <property type="match status" value="1"/>
</dbReference>
<dbReference type="SUPFAM" id="SSF51998">
    <property type="entry name" value="PFL-like glycyl radical enzymes"/>
    <property type="match status" value="1"/>
</dbReference>
<name>Y285_STRZT</name>